<feature type="chain" id="PRO_0000263006" description="Basic helix-loop-helix ARNT-like protein 1">
    <location>
        <begin position="1"/>
        <end position="625"/>
    </location>
</feature>
<feature type="domain" description="bHLH" evidence="4">
    <location>
        <begin position="72"/>
        <end position="125"/>
    </location>
</feature>
<feature type="domain" description="PAS 1" evidence="3">
    <location>
        <begin position="143"/>
        <end position="215"/>
    </location>
</feature>
<feature type="domain" description="PAS 2" evidence="3">
    <location>
        <begin position="325"/>
        <end position="395"/>
    </location>
</feature>
<feature type="domain" description="PAC">
    <location>
        <begin position="400"/>
        <end position="443"/>
    </location>
</feature>
<feature type="region of interest" description="Disordered" evidence="5">
    <location>
        <begin position="1"/>
        <end position="60"/>
    </location>
</feature>
<feature type="region of interest" description="Disordered" evidence="5">
    <location>
        <begin position="454"/>
        <end position="491"/>
    </location>
</feature>
<feature type="region of interest" description="Interaction with CIART" evidence="2">
    <location>
        <begin position="507"/>
        <end position="587"/>
    </location>
</feature>
<feature type="region of interest" description="Disordered" evidence="5">
    <location>
        <begin position="510"/>
        <end position="594"/>
    </location>
</feature>
<feature type="short sequence motif" description="Nuclear localization signal" evidence="2">
    <location>
        <begin position="36"/>
        <end position="41"/>
    </location>
</feature>
<feature type="short sequence motif" description="Nuclear export signal 1" evidence="2">
    <location>
        <begin position="142"/>
        <end position="152"/>
    </location>
</feature>
<feature type="short sequence motif" description="Nuclear export signal 2" evidence="2">
    <location>
        <begin position="360"/>
        <end position="368"/>
    </location>
</feature>
<feature type="compositionally biased region" description="Low complexity" evidence="5">
    <location>
        <begin position="17"/>
        <end position="32"/>
    </location>
</feature>
<feature type="compositionally biased region" description="Basic and acidic residues" evidence="5">
    <location>
        <begin position="51"/>
        <end position="60"/>
    </location>
</feature>
<feature type="compositionally biased region" description="Low complexity" evidence="5">
    <location>
        <begin position="510"/>
        <end position="520"/>
    </location>
</feature>
<feature type="site" description="Interaction with E-box DNA" evidence="1">
    <location>
        <position position="77"/>
    </location>
</feature>
<feature type="site" description="Interaction with E-box DNA" evidence="1">
    <location>
        <position position="80"/>
    </location>
</feature>
<feature type="site" description="Interaction with E-box DNA" evidence="1">
    <location>
        <position position="81"/>
    </location>
</feature>
<feature type="site" description="Interaction with E-box DNA" evidence="1">
    <location>
        <position position="85"/>
    </location>
</feature>
<feature type="site" description="Important for interaction with CLOCK" evidence="1">
    <location>
        <position position="125"/>
    </location>
</feature>
<feature type="modified residue" description="Phosphoserine; by GSK3-beta" evidence="2">
    <location>
        <position position="17"/>
    </location>
</feature>
<feature type="modified residue" description="Phosphothreonine; by GSK3-beta" evidence="2">
    <location>
        <position position="21"/>
    </location>
</feature>
<feature type="modified residue" description="Phosphoserine" evidence="1">
    <location>
        <position position="78"/>
    </location>
</feature>
<feature type="modified residue" description="Phosphoserine; by CK2" evidence="2">
    <location>
        <position position="90"/>
    </location>
</feature>
<feature type="modified residue" description="N6-acetyllysine" evidence="2">
    <location>
        <position position="537"/>
    </location>
</feature>
<feature type="cross-link" description="Glycyl lysine isopeptide (Lys-Gly) (interchain with G-Cter in SUMO2 and SUMO3)" evidence="2">
    <location>
        <position position="252"/>
    </location>
</feature>
<feature type="cross-link" description="Glycyl lysine isopeptide (Lys-Gly) (interchain with G-Cter in SUMO); alternate" evidence="2">
    <location>
        <position position="259"/>
    </location>
</feature>
<feature type="cross-link" description="Glycyl lysine isopeptide (Lys-Gly) (interchain with G-Cter in SUMO2); alternate" evidence="1">
    <location>
        <position position="259"/>
    </location>
</feature>
<accession>Q5R4T2</accession>
<proteinExistence type="evidence at transcript level"/>
<keyword id="KW-0007">Acetylation</keyword>
<keyword id="KW-0010">Activator</keyword>
<keyword id="KW-0090">Biological rhythms</keyword>
<keyword id="KW-0963">Cytoplasm</keyword>
<keyword id="KW-0238">DNA-binding</keyword>
<keyword id="KW-1017">Isopeptide bond</keyword>
<keyword id="KW-0539">Nucleus</keyword>
<keyword id="KW-0597">Phosphoprotein</keyword>
<keyword id="KW-1185">Reference proteome</keyword>
<keyword id="KW-0677">Repeat</keyword>
<keyword id="KW-0804">Transcription</keyword>
<keyword id="KW-0805">Transcription regulation</keyword>
<keyword id="KW-0832">Ubl conjugation</keyword>
<comment type="function">
    <text evidence="1 2">Transcriptional activator which forms a core component of the circadian clock. The circadian clock, an internal time-keeping system, regulates various physiological processes through the generation of approximately 24 hour circadian rhythms in gene expression, which are translated into rhythms in metabolism and behavior. It is derived from the Latin roots 'circa' (about) and 'diem' (day) and acts as an important regulator of a wide array of physiological functions including metabolism, sleep, body temperature, blood pressure, endocrine, immune, cardiovascular, and renal function. Consists of two major components: the central clock, residing in the suprachiasmatic nucleus (SCN) of the brain, and the peripheral clocks that are present in nearly every tissue and organ system. Both the central and peripheral clocks can be reset by environmental cues, also known as Zeitgebers (German for 'timegivers'). The predominant Zeitgeber for the central clock is light, which is sensed by retina and signals directly to the SCN. The central clock entrains the peripheral clocks through neuronal and hormonal signals, body temperature and feeding-related cues, aligning all clocks with the external light/dark cycle. Circadian rhythms allow an organism to achieve temporal homeostasis with its environment at the molecular level by regulating gene expression to create a peak of protein expression once every 24 hours to control when a particular physiological process is most active with respect to the solar day. Transcription and translation of core clock components (CLOCK, NPAS2, BMAL1, BMAL2, PER1, PER2, PER3, CRY1 and CRY2) plays a critical role in rhythm generation, whereas delays imposed by post-translational modifications (PTMs) are important for determining the period (tau) of the rhythms (tau refers to the period of a rhythm and is the length, in time, of one complete cycle). A diurnal rhythm is synchronized with the day/night cycle, while the ultradian and infradian rhythms have a period shorter and longer than 24 hours, respectively. Disruptions in the circadian rhythms contribute to the pathology of cardiovascular diseases, cancer, metabolic syndromes and aging. A transcription/translation feedback loop (TTFL) forms the core of the molecular circadian clock mechanism. Transcription factors, CLOCK or NPAS2 and BMAL1 or BMAL2, form the positive limb of the feedback loop, act in the form of a heterodimer and activate the transcription of core clock genes and clock-controlled genes (involved in key metabolic processes), harboring E-box elements (5'-CACGTG-3') within their promoters. The core clock genes: PER1/2/3 and CRY1/2 which are transcriptional repressors form the negative limb of the feedback loop and interact with the CLOCK|NPAS2-BMAL1|BMAL2 heterodimer inhibiting its activity and thereby negatively regulating their own expression. This heterodimer also activates nuclear receptors NR1D1/2 and RORA/B/G, which form a second feedback loop and which activate and repress BMAL1 transcription, respectively. BMAL1 positively regulates myogenesis and negatively regulates adipogenesis via the transcriptional control of the genes of the canonical Wnt signaling pathway. Plays a role in normal pancreatic beta-cell function; regulates glucose-stimulated insulin secretion via the regulation of antioxidant genes NFE2L2/NRF2 and its targets SESN2, PRDX3, CCLC and CCLM. Negatively regulates the mTORC1 signaling pathway; regulates the expression of MTOR and DEPTOR. Controls diurnal oscillations of Ly6C inflammatory monocytes; rhythmic recruitment of the PRC2 complex imparts diurnal variation to chemokine expression that is necessary to sustain Ly6C monocyte rhythms. Regulates the expression of HSD3B2, STAR, PTGS2, CYP11A1, CYP19A1 and LHCGR in the ovary and also the genes involved in hair growth. Plays an important role in adult hippocampal neurogenesis by regulating the timely entry of neural stem/progenitor cells (NSPCs) into the cell cycle and the number of cell divisions that take place prior to cell-cycle exit. Regulates the circadian expression of CIART and KLF11. The CLOCK-BMAL1 heterodimer regulates the circadian expression of SERPINE1/PAI1, VWF, B3, CCRN4L/NOC, NAMPT, DBP, MYOD1, PPARGC1A, PPARGC1B, SIRT1, GYS2, F7, NGFR, GNRHR, BHLHE40/DEC1, ATF4, MTA1, KLF10 and also genes implicated in glucose and lipid metabolism. Promotes rhythmic chromatin opening, regulating the DNA accessibility of other transcription factors. The NPAS2-BMAL1 heterodimer positively regulates the expression of MAOA, F7 and LDHA and modulates the circadian rhythm of daytime contrast sensitivity by regulating the rhythmic expression of adenylate cyclase type 1 (ADCY1) in the retina. The preferred binding motif for the CLOCK-BMAL1 heterodimer is 5'-CACGTGA-3', which contains a flanking adenine nucleotide at the 3-prime end of the canonical 6-nucleotide E-box sequence. CLOCK specifically binds to the half-site 5'-CAC-3', while BMAL1 binds to the half-site 5'-GTGA-3'. The CLOCK-BMAL1 heterodimer also recognizes the non-canonical E-box motifs 5'-AACGTGA-3' and 5'-CATGTGA-3'. Essential for the rhythmic interaction of CLOCK with ASS1 and plays a critical role in positively regulating CLOCK-mediated acetylation of ASS1. Plays a role in protecting against lethal sepsis by limiting the expression of immune checkpoint protein CD274 in macrophages in a PKM2-dependent manner (By similarity). Regulates the diurnal rhythms of skeletal muscle metabolism via transcriptional activation of genes promoting triglyceride synthesis (DGAT2) and metabolic efficiency (COQ10B) (By similarity).</text>
</comment>
<comment type="subunit">
    <text evidence="1 2">Component of the circadian clock oscillator which includes the CRY1/2 proteins, CLOCK or NPAS2, BMAL1 or BMAL2, CSNK1D and/or CSNK1E, TIMELESS and the PER1/2/3 proteins (By similarity). Forms a heterodimer with CLOCK (By similarity). The CLOCK-BMAL1 heterodimer is required for E-box-dependent transactivation, for CLOCK nuclear translocation and degradation, and, for phosphorylation of both CLOCK and BMAL1 (By similarity). Part of a nuclear complex which also includes RACK1 and PRKCA; RACK1 and PRKCA are recruited to the complex in a circadian manner (By similarity). Interacts with NPAS2 (By similarity). Interacts with EZH2 (By similarity). Interacts with SUMO3 (By similarity). Interacts with SIRT1 (By similarity). Interacts with AHR (By similarity). Interacts with ID1, ID2 and ID3 (By similarity). Interacts with DDX4 (By similarity). Interacts with OGT (By similarity). Interacts with EED and SUZ12 (By similarity). Interacts with MTA1 (By similarity). Interacts with CIART (By similarity). Interacts with HSP90 (By similarity). Interacts with KAT2B and EP300 (By similarity). Interacts with BHLHE40/DEC1 and BHLHE41/DEC2 (By similarity). Interacts with RELB and the interaction is enhanced in the presence of CLOCK (By similarity). Interacts with PER1, PER2, CRY1 and CRY2 and this interaction requires a translocation to the nucleus (By similarity). Interaction of the CLOCK-BMAL1 heterodimer with PER or CRY inhibits transcription activation (By similarity). Interaction of the CLOCK-BMAL1 with CRY1 is independent of DNA but with PER2 is off DNA (By similarity). The CLOCK-BMAL1 heterodimer interacts with GSK3B (By similarity). Interacts with KDM5A (By similarity). Interacts with KMT2A; in a circadian manner (By similarity). Interacts with UBE3A (By similarity). Interacts with PRKCG (By similarity). Interacts with MAGEL2 (By similarity). Interacts with NCOA2 (By similarity). Interacts with THRAP3 (By similarity). The CLOCK-BMAL1 heterodimer interacts with PASD1 (By similarity). Interacts with PASD1 (By similarity). Interacts with USP9X (By similarity). Interacts with PIWIL2 (via PIWI domain) (By similarity). Interacts with HDAC3 (By similarity). Interacts with HNF4A (By similarity).</text>
</comment>
<comment type="subcellular location">
    <subcellularLocation>
        <location evidence="4">Nucleus</location>
    </subcellularLocation>
    <subcellularLocation>
        <location evidence="2">Cytoplasm</location>
    </subcellularLocation>
    <subcellularLocation>
        <location evidence="2">Nucleus</location>
        <location evidence="2">PML body</location>
    </subcellularLocation>
    <text evidence="2">Shuttles between the nucleus and the cytoplasm and this nucleocytoplasmic shuttling is essential for the nuclear accumulation of CLOCK, target gene transcription and the degradation of the CLOCK-BMAL1 heterodimer. The sumoylated form localizes in the PML body. Sequestered to the cytoplasm in the presence of ID2.</text>
</comment>
<comment type="PTM">
    <text evidence="2">Ubiquitinated, leading to its proteasomal degradation. Deubiquitinated by USP9X.</text>
</comment>
<comment type="PTM">
    <text evidence="2">O-glycosylated; contains O-GlcNAc. O-glycosylation by OGT prevents protein degradation by inhibiting ubiquitination. It also stabilizes the CLOCK-BMAL1 heterodimer thereby increasing CLOCK-BMAL1-mediated transcription of genes in the negative loop of the circadian clock such as PER1/2/3 and CRY1/2.</text>
</comment>
<comment type="PTM">
    <text evidence="2">Acetylated on Lys-537 by CLOCK during the repression phase of the circadian cycle. Acetylation facilitates recruitment of CRY1 protein and initiates the repression phase of the circadian cycle. Acetylated at Lys-537 by KAT5 during the activation phase of the cycle, leading to recruitment of the positive transcription elongation factor b (P-TEFb) and BRD4, followed by productive elongation of circadian transcripts. Deacetylated by SIRT1, which may result in decreased protein stability.</text>
</comment>
<comment type="PTM">
    <text evidence="1 2">Phosphorylated upon dimerization with CLOCK. Phosphorylation enhances the transcriptional activity, alters the subcellular localization and decreases the stability of the CLOCK-BMAL1 heterodimer by promoting its degradation. Phosphorylation shows circadian variations in the liver with a peak between CT10 to CT14. Phosphorylation at Ser-90 by CK2 is essential for its nuclear localization, its interaction with CLOCK and controls CLOCK nuclear entry. Dephosphorylation at Ser-78 is important for dimerization with CLOCK and transcriptional activity.</text>
</comment>
<comment type="PTM">
    <text evidence="2">Sumoylated on Lys-259 upon dimerization with CLOCK. Predominantly conjugated to poly-SUMO2/3 rather than SUMO1 and the level of these conjugates undergo rhythmic variation, peaking at CT9-CT12. Sumoylation localizes it exclusively to the PML body and promotes its ubiquitination in the PML body, ubiquitin-dependent proteasomal degradation and the transcriptional activity of the CLOCK-BMAL1 heterodimer.</text>
</comment>
<comment type="PTM">
    <text evidence="2">Undergoes lysosome-mediated degradation in a time-dependent manner in the liver.</text>
</comment>
<dbReference type="EMBL" id="CR861161">
    <property type="protein sequence ID" value="CAH93234.1"/>
    <property type="molecule type" value="mRNA"/>
</dbReference>
<dbReference type="RefSeq" id="NP_001126900.1">
    <property type="nucleotide sequence ID" value="NM_001133428.1"/>
</dbReference>
<dbReference type="SMR" id="Q5R4T2"/>
<dbReference type="FunCoup" id="Q5R4T2">
    <property type="interactions" value="1582"/>
</dbReference>
<dbReference type="STRING" id="9601.ENSPPYP00000003988"/>
<dbReference type="GeneID" id="100173916"/>
<dbReference type="KEGG" id="pon:100173916"/>
<dbReference type="CTD" id="406"/>
<dbReference type="eggNOG" id="KOG3561">
    <property type="taxonomic scope" value="Eukaryota"/>
</dbReference>
<dbReference type="InParanoid" id="Q5R4T2"/>
<dbReference type="OrthoDB" id="71302at2759"/>
<dbReference type="Proteomes" id="UP000001595">
    <property type="component" value="Unplaced"/>
</dbReference>
<dbReference type="GO" id="GO:0033391">
    <property type="term" value="C:chromatoid body"/>
    <property type="evidence" value="ECO:0000250"/>
    <property type="project" value="UniProtKB"/>
</dbReference>
<dbReference type="GO" id="GO:0005634">
    <property type="term" value="C:nucleus"/>
    <property type="evidence" value="ECO:0000250"/>
    <property type="project" value="UniProtKB"/>
</dbReference>
<dbReference type="GO" id="GO:0016605">
    <property type="term" value="C:PML body"/>
    <property type="evidence" value="ECO:0007669"/>
    <property type="project" value="UniProtKB-SubCell"/>
</dbReference>
<dbReference type="GO" id="GO:0005667">
    <property type="term" value="C:transcription regulator complex"/>
    <property type="evidence" value="ECO:0000250"/>
    <property type="project" value="UniProtKB"/>
</dbReference>
<dbReference type="GO" id="GO:0003677">
    <property type="term" value="F:DNA binding"/>
    <property type="evidence" value="ECO:0000250"/>
    <property type="project" value="UniProtKB"/>
</dbReference>
<dbReference type="GO" id="GO:0003700">
    <property type="term" value="F:DNA-binding transcription factor activity"/>
    <property type="evidence" value="ECO:0007669"/>
    <property type="project" value="InterPro"/>
</dbReference>
<dbReference type="GO" id="GO:0070888">
    <property type="term" value="F:E-box binding"/>
    <property type="evidence" value="ECO:0000250"/>
    <property type="project" value="UniProtKB"/>
</dbReference>
<dbReference type="GO" id="GO:0046983">
    <property type="term" value="F:protein dimerization activity"/>
    <property type="evidence" value="ECO:0007669"/>
    <property type="project" value="InterPro"/>
</dbReference>
<dbReference type="GO" id="GO:0000978">
    <property type="term" value="F:RNA polymerase II cis-regulatory region sequence-specific DNA binding"/>
    <property type="evidence" value="ECO:0000250"/>
    <property type="project" value="UniProtKB"/>
</dbReference>
<dbReference type="GO" id="GO:0043565">
    <property type="term" value="F:sequence-specific DNA binding"/>
    <property type="evidence" value="ECO:0000250"/>
    <property type="project" value="UniProtKB"/>
</dbReference>
<dbReference type="GO" id="GO:0000976">
    <property type="term" value="F:transcription cis-regulatory region binding"/>
    <property type="evidence" value="ECO:0000250"/>
    <property type="project" value="UniProtKB"/>
</dbReference>
<dbReference type="GO" id="GO:0032922">
    <property type="term" value="P:circadian regulation of gene expression"/>
    <property type="evidence" value="ECO:0000250"/>
    <property type="project" value="UniProtKB"/>
</dbReference>
<dbReference type="GO" id="GO:0045892">
    <property type="term" value="P:negative regulation of DNA-templated transcription"/>
    <property type="evidence" value="ECO:0000250"/>
    <property type="project" value="UniProtKB"/>
</dbReference>
<dbReference type="GO" id="GO:0045599">
    <property type="term" value="P:negative regulation of fat cell differentiation"/>
    <property type="evidence" value="ECO:0000250"/>
    <property type="project" value="UniProtKB"/>
</dbReference>
<dbReference type="GO" id="GO:2000323">
    <property type="term" value="P:negative regulation of nuclear receptor-mediated glucocorticoid signaling pathway"/>
    <property type="evidence" value="ECO:0000250"/>
    <property type="project" value="UniProtKB"/>
</dbReference>
<dbReference type="GO" id="GO:0032007">
    <property type="term" value="P:negative regulation of TOR signaling"/>
    <property type="evidence" value="ECO:0000250"/>
    <property type="project" value="UniProtKB"/>
</dbReference>
<dbReference type="GO" id="GO:0090403">
    <property type="term" value="P:oxidative stress-induced premature senescence"/>
    <property type="evidence" value="ECO:0000250"/>
    <property type="project" value="UniProtKB"/>
</dbReference>
<dbReference type="GO" id="GO:0090263">
    <property type="term" value="P:positive regulation of canonical Wnt signaling pathway"/>
    <property type="evidence" value="ECO:0000250"/>
    <property type="project" value="UniProtKB"/>
</dbReference>
<dbReference type="GO" id="GO:0042753">
    <property type="term" value="P:positive regulation of circadian rhythm"/>
    <property type="evidence" value="ECO:0000250"/>
    <property type="project" value="UniProtKB"/>
</dbReference>
<dbReference type="GO" id="GO:0045893">
    <property type="term" value="P:positive regulation of DNA-templated transcription"/>
    <property type="evidence" value="ECO:0000250"/>
    <property type="project" value="UniProtKB"/>
</dbReference>
<dbReference type="GO" id="GO:1901985">
    <property type="term" value="P:positive regulation of protein acetylation"/>
    <property type="evidence" value="ECO:0000250"/>
    <property type="project" value="UniProtKB"/>
</dbReference>
<dbReference type="GO" id="GO:2001016">
    <property type="term" value="P:positive regulation of skeletal muscle cell differentiation"/>
    <property type="evidence" value="ECO:0000250"/>
    <property type="project" value="UniProtKB"/>
</dbReference>
<dbReference type="GO" id="GO:0043161">
    <property type="term" value="P:proteasome-mediated ubiquitin-dependent protein catabolic process"/>
    <property type="evidence" value="ECO:0000250"/>
    <property type="project" value="UniProtKB"/>
</dbReference>
<dbReference type="GO" id="GO:0051726">
    <property type="term" value="P:regulation of cell cycle"/>
    <property type="evidence" value="ECO:0000250"/>
    <property type="project" value="UniProtKB"/>
</dbReference>
<dbReference type="GO" id="GO:2000772">
    <property type="term" value="P:regulation of cellular senescence"/>
    <property type="evidence" value="ECO:0000250"/>
    <property type="project" value="UniProtKB"/>
</dbReference>
<dbReference type="GO" id="GO:0006355">
    <property type="term" value="P:regulation of DNA-templated transcription"/>
    <property type="evidence" value="ECO:0000250"/>
    <property type="project" value="UniProtKB"/>
</dbReference>
<dbReference type="GO" id="GO:0042634">
    <property type="term" value="P:regulation of hair cycle"/>
    <property type="evidence" value="ECO:0000250"/>
    <property type="project" value="UniProtKB"/>
</dbReference>
<dbReference type="GO" id="GO:0050796">
    <property type="term" value="P:regulation of insulin secretion"/>
    <property type="evidence" value="ECO:0000250"/>
    <property type="project" value="UniProtKB"/>
</dbReference>
<dbReference type="GO" id="GO:0050767">
    <property type="term" value="P:regulation of neurogenesis"/>
    <property type="evidence" value="ECO:0000250"/>
    <property type="project" value="UniProtKB"/>
</dbReference>
<dbReference type="GO" id="GO:2000074">
    <property type="term" value="P:regulation of type B pancreatic cell development"/>
    <property type="evidence" value="ECO:0000250"/>
    <property type="project" value="UniProtKB"/>
</dbReference>
<dbReference type="GO" id="GO:0051775">
    <property type="term" value="P:response to redox state"/>
    <property type="evidence" value="ECO:0000250"/>
    <property type="project" value="UniProtKB"/>
</dbReference>
<dbReference type="GO" id="GO:0007283">
    <property type="term" value="P:spermatogenesis"/>
    <property type="evidence" value="ECO:0000250"/>
    <property type="project" value="UniProtKB"/>
</dbReference>
<dbReference type="CDD" id="cd11438">
    <property type="entry name" value="bHLH-PAS_ARNTL_PASD3"/>
    <property type="match status" value="1"/>
</dbReference>
<dbReference type="CDD" id="cd00130">
    <property type="entry name" value="PAS"/>
    <property type="match status" value="2"/>
</dbReference>
<dbReference type="FunFam" id="4.10.280.10:FF:000018">
    <property type="entry name" value="Aryl hydrocarbon receptor nuclear translocator-like protein 1"/>
    <property type="match status" value="1"/>
</dbReference>
<dbReference type="FunFam" id="3.30.450.20:FF:000006">
    <property type="entry name" value="aryl hydrocarbon receptor nuclear translocator-like protein 1"/>
    <property type="match status" value="1"/>
</dbReference>
<dbReference type="FunFam" id="3.30.450.20:FF:000010">
    <property type="entry name" value="Aryl hydrocarbon receptor nuclear translocator-like, isoform CRA_b"/>
    <property type="match status" value="1"/>
</dbReference>
<dbReference type="Gene3D" id="4.10.280.10">
    <property type="entry name" value="Helix-loop-helix DNA-binding domain"/>
    <property type="match status" value="1"/>
</dbReference>
<dbReference type="Gene3D" id="3.30.450.20">
    <property type="entry name" value="PAS domain"/>
    <property type="match status" value="2"/>
</dbReference>
<dbReference type="InterPro" id="IPR011598">
    <property type="entry name" value="bHLH_dom"/>
</dbReference>
<dbReference type="InterPro" id="IPR050933">
    <property type="entry name" value="Circadian_TF"/>
</dbReference>
<dbReference type="InterPro" id="IPR036638">
    <property type="entry name" value="HLH_DNA-bd_sf"/>
</dbReference>
<dbReference type="InterPro" id="IPR001067">
    <property type="entry name" value="Nuc_translocat"/>
</dbReference>
<dbReference type="InterPro" id="IPR001610">
    <property type="entry name" value="PAC"/>
</dbReference>
<dbReference type="InterPro" id="IPR000014">
    <property type="entry name" value="PAS"/>
</dbReference>
<dbReference type="InterPro" id="IPR035965">
    <property type="entry name" value="PAS-like_dom_sf"/>
</dbReference>
<dbReference type="InterPro" id="IPR013767">
    <property type="entry name" value="PAS_fold"/>
</dbReference>
<dbReference type="NCBIfam" id="TIGR00229">
    <property type="entry name" value="sensory_box"/>
    <property type="match status" value="2"/>
</dbReference>
<dbReference type="PANTHER" id="PTHR23042">
    <property type="entry name" value="CIRCADIAN PROTEIN CLOCK/ARNT/BMAL/PAS"/>
    <property type="match status" value="1"/>
</dbReference>
<dbReference type="Pfam" id="PF00010">
    <property type="entry name" value="HLH"/>
    <property type="match status" value="1"/>
</dbReference>
<dbReference type="Pfam" id="PF00989">
    <property type="entry name" value="PAS"/>
    <property type="match status" value="1"/>
</dbReference>
<dbReference type="Pfam" id="PF14598">
    <property type="entry name" value="PAS_11"/>
    <property type="match status" value="1"/>
</dbReference>
<dbReference type="PRINTS" id="PR00785">
    <property type="entry name" value="NCTRNSLOCATR"/>
</dbReference>
<dbReference type="SMART" id="SM00353">
    <property type="entry name" value="HLH"/>
    <property type="match status" value="1"/>
</dbReference>
<dbReference type="SMART" id="SM00086">
    <property type="entry name" value="PAC"/>
    <property type="match status" value="1"/>
</dbReference>
<dbReference type="SMART" id="SM00091">
    <property type="entry name" value="PAS"/>
    <property type="match status" value="2"/>
</dbReference>
<dbReference type="SUPFAM" id="SSF47459">
    <property type="entry name" value="HLH, helix-loop-helix DNA-binding domain"/>
    <property type="match status" value="1"/>
</dbReference>
<dbReference type="SUPFAM" id="SSF55785">
    <property type="entry name" value="PYP-like sensor domain (PAS domain)"/>
    <property type="match status" value="2"/>
</dbReference>
<dbReference type="PROSITE" id="PS50888">
    <property type="entry name" value="BHLH"/>
    <property type="match status" value="1"/>
</dbReference>
<dbReference type="PROSITE" id="PS50112">
    <property type="entry name" value="PAS"/>
    <property type="match status" value="2"/>
</dbReference>
<organism>
    <name type="scientific">Pongo abelii</name>
    <name type="common">Sumatran orangutan</name>
    <name type="synonym">Pongo pygmaeus abelii</name>
    <dbReference type="NCBI Taxonomy" id="9601"/>
    <lineage>
        <taxon>Eukaryota</taxon>
        <taxon>Metazoa</taxon>
        <taxon>Chordata</taxon>
        <taxon>Craniata</taxon>
        <taxon>Vertebrata</taxon>
        <taxon>Euteleostomi</taxon>
        <taxon>Mammalia</taxon>
        <taxon>Eutheria</taxon>
        <taxon>Euarchontoglires</taxon>
        <taxon>Primates</taxon>
        <taxon>Haplorrhini</taxon>
        <taxon>Catarrhini</taxon>
        <taxon>Hominidae</taxon>
        <taxon>Pongo</taxon>
    </lineage>
</organism>
<gene>
    <name type="primary">BMAL1</name>
    <name type="synonym">ARNTL</name>
</gene>
<name>BMAL1_PONAB</name>
<reference key="1">
    <citation type="submission" date="2004-11" db="EMBL/GenBank/DDBJ databases">
        <authorList>
            <consortium name="The German cDNA consortium"/>
        </authorList>
    </citation>
    <scope>NUCLEOTIDE SEQUENCE [LARGE SCALE MRNA]</scope>
    <source>
        <tissue>Brain cortex</tissue>
    </source>
</reference>
<protein>
    <recommendedName>
        <fullName>Basic helix-loop-helix ARNT-like protein 1</fullName>
    </recommendedName>
    <alternativeName>
        <fullName>Aryl hydrocarbon receptor nuclear translocator-like protein 1</fullName>
    </alternativeName>
    <alternativeName>
        <fullName>Brain and muscle ARNT-like 1</fullName>
    </alternativeName>
</protein>
<evidence type="ECO:0000250" key="1">
    <source>
        <dbReference type="UniProtKB" id="O00327"/>
    </source>
</evidence>
<evidence type="ECO:0000250" key="2">
    <source>
        <dbReference type="UniProtKB" id="Q9WTL8"/>
    </source>
</evidence>
<evidence type="ECO:0000255" key="3">
    <source>
        <dbReference type="PROSITE-ProRule" id="PRU00140"/>
    </source>
</evidence>
<evidence type="ECO:0000255" key="4">
    <source>
        <dbReference type="PROSITE-ProRule" id="PRU00981"/>
    </source>
</evidence>
<evidence type="ECO:0000256" key="5">
    <source>
        <dbReference type="SAM" id="MobiDB-lite"/>
    </source>
</evidence>
<sequence>MADQRMDISSTISDFMSPGPTDLLSSSLGTSGVDCNRKRKGSSTDYQESMDTDKDDPHGRLEYTEHQGRIKNAREAHSQIEKRRRDKMNSFIDELASLVPTCNAMSRKLDKLTVLRMAVQHMKTLRGATNPYTEANYKPTFLSDDELKHLILRAADGFLFVVGCDRGKILFVSESAFKILNYSQNDLIGQSLFDYLHPKDIAKVKEQLSSSDTAPRERLIDAKTGLPVKTDITPGPSRLCSGARRSFFCRMKCNRPSVKVEDKDFPSTCSKKKDRKSFCTIHSTGYLKSWPPTKMGLDEDNEPDNEGCNLSCLVAIGRLHSHVVPQPVNGEIRVKSMEYVSRHAIDGKFVFVDQRATAILAYLPQELLGTSCYEYFHQDDIGHLAECHRQVLQTREKITTNCYKFKIKDGSFITLRSRWFSFMNPWTKEVEYIVSTNTVVLANVLEGGDPTFPQLTASPRSMDSMLPSGEGGPKRTHPTVPGIPGGTRAGAGKIGRMIAEEIMEIHRIRGSSPSSCGSSPLNITSTPPPDASSPGGKKILNGGTPDIPSSGLLSGQAQENPGYPYSDSSSILGENPHIGIDMIDNDQGSSSPSNDEAAMAVIMSLLEADAGLGGPVDFSDLPWPL</sequence>